<gene>
    <name evidence="1" type="primary">hslV</name>
    <name type="ordered locus">RALTA_A0142</name>
</gene>
<name>HSLV_CUPTR</name>
<comment type="function">
    <text evidence="1">Protease subunit of a proteasome-like degradation complex believed to be a general protein degrading machinery.</text>
</comment>
<comment type="catalytic activity">
    <reaction evidence="1">
        <text>ATP-dependent cleavage of peptide bonds with broad specificity.</text>
        <dbReference type="EC" id="3.4.25.2"/>
    </reaction>
</comment>
<comment type="activity regulation">
    <text evidence="1">Allosterically activated by HslU binding.</text>
</comment>
<comment type="subunit">
    <text evidence="1">A double ring-shaped homohexamer of HslV is capped on each side by a ring-shaped HslU homohexamer. The assembly of the HslU/HslV complex is dependent on binding of ATP.</text>
</comment>
<comment type="subcellular location">
    <subcellularLocation>
        <location evidence="1">Cytoplasm</location>
    </subcellularLocation>
</comment>
<comment type="similarity">
    <text evidence="1">Belongs to the peptidase T1B family. HslV subfamily.</text>
</comment>
<organism>
    <name type="scientific">Cupriavidus taiwanensis (strain DSM 17343 / BCRC 17206 / CCUG 44338 / CIP 107171 / LMG 19424 / R1)</name>
    <name type="common">Ralstonia taiwanensis (strain LMG 19424)</name>
    <dbReference type="NCBI Taxonomy" id="977880"/>
    <lineage>
        <taxon>Bacteria</taxon>
        <taxon>Pseudomonadati</taxon>
        <taxon>Pseudomonadota</taxon>
        <taxon>Betaproteobacteria</taxon>
        <taxon>Burkholderiales</taxon>
        <taxon>Burkholderiaceae</taxon>
        <taxon>Cupriavidus</taxon>
    </lineage>
</organism>
<sequence length="178" mass="19097">MEQYHGTTIVSVRRGNQVALGGDGQVTLGNIVMKGTARKVRRIYNGKVLVGFAGSTADAFSLLDRFEAKLEKYQGNLTRAAVDLAKDWRSDRALRRLEAMLITADRDTTLVITGNGDVLDPEGGIAAIGSGGAYAQSAAKALMENTEMAPKDVVEKALTIAGELCIYTNTNFVIETLE</sequence>
<keyword id="KW-0021">Allosteric enzyme</keyword>
<keyword id="KW-0963">Cytoplasm</keyword>
<keyword id="KW-0378">Hydrolase</keyword>
<keyword id="KW-0479">Metal-binding</keyword>
<keyword id="KW-0645">Protease</keyword>
<keyword id="KW-0915">Sodium</keyword>
<keyword id="KW-0888">Threonine protease</keyword>
<evidence type="ECO:0000255" key="1">
    <source>
        <dbReference type="HAMAP-Rule" id="MF_00248"/>
    </source>
</evidence>
<reference key="1">
    <citation type="journal article" date="2008" name="Genome Res.">
        <title>Genome sequence of the beta-rhizobium Cupriavidus taiwanensis and comparative genomics of rhizobia.</title>
        <authorList>
            <person name="Amadou C."/>
            <person name="Pascal G."/>
            <person name="Mangenot S."/>
            <person name="Glew M."/>
            <person name="Bontemps C."/>
            <person name="Capela D."/>
            <person name="Carrere S."/>
            <person name="Cruveiller S."/>
            <person name="Dossat C."/>
            <person name="Lajus A."/>
            <person name="Marchetti M."/>
            <person name="Poinsot V."/>
            <person name="Rouy Z."/>
            <person name="Servin B."/>
            <person name="Saad M."/>
            <person name="Schenowitz C."/>
            <person name="Barbe V."/>
            <person name="Batut J."/>
            <person name="Medigue C."/>
            <person name="Masson-Boivin C."/>
        </authorList>
    </citation>
    <scope>NUCLEOTIDE SEQUENCE [LARGE SCALE GENOMIC DNA]</scope>
    <source>
        <strain>DSM 17343 / BCRC 17206 / CCUG 44338 / CIP 107171 / LMG 19424 / R1</strain>
    </source>
</reference>
<protein>
    <recommendedName>
        <fullName evidence="1">ATP-dependent protease subunit HslV</fullName>
        <ecNumber evidence="1">3.4.25.2</ecNumber>
    </recommendedName>
</protein>
<dbReference type="EC" id="3.4.25.2" evidence="1"/>
<dbReference type="EMBL" id="CU633749">
    <property type="protein sequence ID" value="CAP62815.1"/>
    <property type="molecule type" value="Genomic_DNA"/>
</dbReference>
<dbReference type="RefSeq" id="WP_012351483.1">
    <property type="nucleotide sequence ID" value="NC_010528.1"/>
</dbReference>
<dbReference type="SMR" id="B2AGB6"/>
<dbReference type="MEROPS" id="T01.006"/>
<dbReference type="GeneID" id="29762097"/>
<dbReference type="KEGG" id="cti:RALTA_A0142"/>
<dbReference type="eggNOG" id="COG5405">
    <property type="taxonomic scope" value="Bacteria"/>
</dbReference>
<dbReference type="HOGENOM" id="CLU_093872_1_0_4"/>
<dbReference type="BioCyc" id="CTAI977880:RALTA_RS00705-MONOMER"/>
<dbReference type="Proteomes" id="UP000001692">
    <property type="component" value="Chromosome 1"/>
</dbReference>
<dbReference type="GO" id="GO:0009376">
    <property type="term" value="C:HslUV protease complex"/>
    <property type="evidence" value="ECO:0007669"/>
    <property type="project" value="UniProtKB-UniRule"/>
</dbReference>
<dbReference type="GO" id="GO:0005839">
    <property type="term" value="C:proteasome core complex"/>
    <property type="evidence" value="ECO:0007669"/>
    <property type="project" value="InterPro"/>
</dbReference>
<dbReference type="GO" id="GO:0046872">
    <property type="term" value="F:metal ion binding"/>
    <property type="evidence" value="ECO:0007669"/>
    <property type="project" value="UniProtKB-KW"/>
</dbReference>
<dbReference type="GO" id="GO:0004298">
    <property type="term" value="F:threonine-type endopeptidase activity"/>
    <property type="evidence" value="ECO:0007669"/>
    <property type="project" value="UniProtKB-KW"/>
</dbReference>
<dbReference type="GO" id="GO:0051603">
    <property type="term" value="P:proteolysis involved in protein catabolic process"/>
    <property type="evidence" value="ECO:0007669"/>
    <property type="project" value="InterPro"/>
</dbReference>
<dbReference type="CDD" id="cd01913">
    <property type="entry name" value="protease_HslV"/>
    <property type="match status" value="1"/>
</dbReference>
<dbReference type="FunFam" id="3.60.20.10:FF:000002">
    <property type="entry name" value="ATP-dependent protease subunit HslV"/>
    <property type="match status" value="1"/>
</dbReference>
<dbReference type="Gene3D" id="3.60.20.10">
    <property type="entry name" value="Glutamine Phosphoribosylpyrophosphate, subunit 1, domain 1"/>
    <property type="match status" value="1"/>
</dbReference>
<dbReference type="HAMAP" id="MF_00248">
    <property type="entry name" value="HslV"/>
    <property type="match status" value="1"/>
</dbReference>
<dbReference type="InterPro" id="IPR022281">
    <property type="entry name" value="ATP-dep_Prtase_HsIV_su"/>
</dbReference>
<dbReference type="InterPro" id="IPR029055">
    <property type="entry name" value="Ntn_hydrolases_N"/>
</dbReference>
<dbReference type="InterPro" id="IPR001353">
    <property type="entry name" value="Proteasome_sua/b"/>
</dbReference>
<dbReference type="InterPro" id="IPR023333">
    <property type="entry name" value="Proteasome_suB-type"/>
</dbReference>
<dbReference type="NCBIfam" id="TIGR03692">
    <property type="entry name" value="ATP_dep_HslV"/>
    <property type="match status" value="1"/>
</dbReference>
<dbReference type="NCBIfam" id="NF003964">
    <property type="entry name" value="PRK05456.1"/>
    <property type="match status" value="1"/>
</dbReference>
<dbReference type="PANTHER" id="PTHR32194:SF0">
    <property type="entry name" value="ATP-DEPENDENT PROTEASE SUBUNIT HSLV"/>
    <property type="match status" value="1"/>
</dbReference>
<dbReference type="PANTHER" id="PTHR32194">
    <property type="entry name" value="METALLOPROTEASE TLDD"/>
    <property type="match status" value="1"/>
</dbReference>
<dbReference type="Pfam" id="PF00227">
    <property type="entry name" value="Proteasome"/>
    <property type="match status" value="1"/>
</dbReference>
<dbReference type="PIRSF" id="PIRSF039093">
    <property type="entry name" value="HslV"/>
    <property type="match status" value="1"/>
</dbReference>
<dbReference type="SUPFAM" id="SSF56235">
    <property type="entry name" value="N-terminal nucleophile aminohydrolases (Ntn hydrolases)"/>
    <property type="match status" value="1"/>
</dbReference>
<dbReference type="PROSITE" id="PS51476">
    <property type="entry name" value="PROTEASOME_BETA_2"/>
    <property type="match status" value="1"/>
</dbReference>
<feature type="chain" id="PRO_1000100887" description="ATP-dependent protease subunit HslV">
    <location>
        <begin position="1"/>
        <end position="178"/>
    </location>
</feature>
<feature type="active site" evidence="1">
    <location>
        <position position="7"/>
    </location>
</feature>
<feature type="binding site" evidence="1">
    <location>
        <position position="162"/>
    </location>
    <ligand>
        <name>Na(+)</name>
        <dbReference type="ChEBI" id="CHEBI:29101"/>
    </ligand>
</feature>
<feature type="binding site" evidence="1">
    <location>
        <position position="165"/>
    </location>
    <ligand>
        <name>Na(+)</name>
        <dbReference type="ChEBI" id="CHEBI:29101"/>
    </ligand>
</feature>
<feature type="binding site" evidence="1">
    <location>
        <position position="168"/>
    </location>
    <ligand>
        <name>Na(+)</name>
        <dbReference type="ChEBI" id="CHEBI:29101"/>
    </ligand>
</feature>
<accession>B2AGB6</accession>
<proteinExistence type="inferred from homology"/>